<protein>
    <recommendedName>
        <fullName evidence="5">Inositol-tetrakisphosphate 1-kinase 6</fullName>
        <ecNumber evidence="5">2.7.1.134</ecNumber>
    </recommendedName>
    <alternativeName>
        <fullName evidence="5">Inositol 1,3,4-trisphosphate 5/6-kinase 6</fullName>
        <shortName evidence="5">Inositol-triphosphate 5/6-kinase 6</shortName>
        <shortName evidence="5">Ins(1,3,4)P(3) 5/6-kinase 6</shortName>
        <shortName evidence="5">OsITP5/6K-6</shortName>
        <shortName evidence="5">OsITPK6</shortName>
        <ecNumber evidence="5">2.7.1.159</ecNumber>
    </alternativeName>
</protein>
<accession>B8BDK0</accession>
<feature type="chain" id="PRO_0000431880" description="Inositol-tetrakisphosphate 1-kinase 6">
    <location>
        <begin position="1"/>
        <end position="547"/>
    </location>
</feature>
<feature type="domain" description="ATP-grasp" evidence="4">
    <location>
        <begin position="327"/>
        <end position="539"/>
    </location>
</feature>
<feature type="binding site" evidence="3">
    <location>
        <position position="263"/>
    </location>
    <ligand>
        <name>1D-myo-inositol 1,3,4-trisphosphate</name>
        <dbReference type="ChEBI" id="CHEBI:58414"/>
    </ligand>
</feature>
<feature type="binding site" evidence="1">
    <location>
        <position position="317"/>
    </location>
    <ligand>
        <name>ATP</name>
        <dbReference type="ChEBI" id="CHEBI:30616"/>
    </ligand>
</feature>
<feature type="binding site" evidence="1">
    <location>
        <position position="370"/>
    </location>
    <ligand>
        <name>ATP</name>
        <dbReference type="ChEBI" id="CHEBI:30616"/>
    </ligand>
</feature>
<feature type="binding site" evidence="3">
    <location>
        <position position="381"/>
    </location>
    <ligand>
        <name>1D-myo-inositol 1,3,4-trisphosphate</name>
        <dbReference type="ChEBI" id="CHEBI:58414"/>
    </ligand>
</feature>
<feature type="binding site" evidence="1">
    <location>
        <begin position="404"/>
        <end position="415"/>
    </location>
    <ligand>
        <name>ATP</name>
        <dbReference type="ChEBI" id="CHEBI:30616"/>
    </ligand>
</feature>
<feature type="binding site" evidence="3">
    <location>
        <position position="415"/>
    </location>
    <ligand>
        <name>1D-myo-inositol 1,3,4-trisphosphate</name>
        <dbReference type="ChEBI" id="CHEBI:58414"/>
    </ligand>
</feature>
<feature type="binding site" evidence="1">
    <location>
        <position position="430"/>
    </location>
    <ligand>
        <name>ATP</name>
        <dbReference type="ChEBI" id="CHEBI:30616"/>
    </ligand>
</feature>
<feature type="binding site" evidence="1">
    <location>
        <position position="450"/>
    </location>
    <ligand>
        <name>ATP</name>
        <dbReference type="ChEBI" id="CHEBI:30616"/>
    </ligand>
</feature>
<feature type="binding site" evidence="1">
    <location>
        <position position="497"/>
    </location>
    <ligand>
        <name>Mg(2+)</name>
        <dbReference type="ChEBI" id="CHEBI:18420"/>
        <label>1</label>
    </ligand>
</feature>
<feature type="binding site" evidence="1">
    <location>
        <position position="511"/>
    </location>
    <ligand>
        <name>Mg(2+)</name>
        <dbReference type="ChEBI" id="CHEBI:18420"/>
        <label>1</label>
    </ligand>
</feature>
<feature type="binding site" evidence="1">
    <location>
        <position position="511"/>
    </location>
    <ligand>
        <name>Mg(2+)</name>
        <dbReference type="ChEBI" id="CHEBI:18420"/>
        <label>2</label>
    </ligand>
</feature>
<feature type="binding site" evidence="3">
    <location>
        <position position="513"/>
    </location>
    <ligand>
        <name>1D-myo-inositol 1,3,4-trisphosphate</name>
        <dbReference type="ChEBI" id="CHEBI:58414"/>
    </ligand>
</feature>
<feature type="binding site" evidence="1">
    <location>
        <position position="513"/>
    </location>
    <ligand>
        <name>Mg(2+)</name>
        <dbReference type="ChEBI" id="CHEBI:18420"/>
        <label>2</label>
    </ligand>
</feature>
<feature type="binding site" evidence="3">
    <location>
        <position position="517"/>
    </location>
    <ligand>
        <name>1D-myo-inositol 1,3,4-trisphosphate</name>
        <dbReference type="ChEBI" id="CHEBI:58414"/>
    </ligand>
</feature>
<gene>
    <name evidence="5" type="primary">ITPK6</name>
    <name evidence="6" type="ORF">OsI_32064</name>
</gene>
<sequence>MPSMRVTTDTWPRRAAQEPLLLLLLRSSLMKSASLQALNPNRAMAAMGRSVRVVLDSSVLLDPSGVTAEEEEVVVALRPGAEALLRRLRYSNLRVAICHPEGLTTNESGFLEKTAKLYSFGYMPLTSPSGSNLLNELMLEWSETNFCFYVTSGVHEGLLSELQNHNWEVIAMGNEDVIKNSGVIHISMLQELLITLATSIKKEIGNSSAFVVGYVMKQSREEDFAKRGAFPIYPSKNDLIFVPLSFELPLASQLQEVDLVLHKITDEIINIDPNSSISFPKGISFSPGMSEIIRFVEEHCDFCVIDPFKNIYPLLDRIQIQEILIRLEGLSAEGRPKLRAPCFLKIESFCGSELQKQLAEAKLSFPLIVKPQVACGVADAHNMALIFKIEEFSNLSVPLPAILQEYIDHGSKIFKFYAIGDKIFHAIKNSMPNASHLKSSSGGKPLTFNSLKTLPVATKEQLLQNEVQDSKLLDINLVEEAAKLLKELLGLTIFGFDVVVQESSGDHVIVDLNYLPSFKEVPDNVAMPAFWDAIKQSYESRKQMTQT</sequence>
<keyword id="KW-0067">ATP-binding</keyword>
<keyword id="KW-0418">Kinase</keyword>
<keyword id="KW-0460">Magnesium</keyword>
<keyword id="KW-0479">Metal-binding</keyword>
<keyword id="KW-0547">Nucleotide-binding</keyword>
<keyword id="KW-1185">Reference proteome</keyword>
<keyword id="KW-0808">Transferase</keyword>
<proteinExistence type="inferred from homology"/>
<organism>
    <name type="scientific">Oryza sativa subsp. indica</name>
    <name type="common">Rice</name>
    <dbReference type="NCBI Taxonomy" id="39946"/>
    <lineage>
        <taxon>Eukaryota</taxon>
        <taxon>Viridiplantae</taxon>
        <taxon>Streptophyta</taxon>
        <taxon>Embryophyta</taxon>
        <taxon>Tracheophyta</taxon>
        <taxon>Spermatophyta</taxon>
        <taxon>Magnoliopsida</taxon>
        <taxon>Liliopsida</taxon>
        <taxon>Poales</taxon>
        <taxon>Poaceae</taxon>
        <taxon>BOP clade</taxon>
        <taxon>Oryzoideae</taxon>
        <taxon>Oryzeae</taxon>
        <taxon>Oryzinae</taxon>
        <taxon>Oryza</taxon>
        <taxon>Oryza sativa</taxon>
    </lineage>
</organism>
<reference key="1">
    <citation type="journal article" date="2005" name="PLoS Biol.">
        <title>The genomes of Oryza sativa: a history of duplications.</title>
        <authorList>
            <person name="Yu J."/>
            <person name="Wang J."/>
            <person name="Lin W."/>
            <person name="Li S."/>
            <person name="Li H."/>
            <person name="Zhou J."/>
            <person name="Ni P."/>
            <person name="Dong W."/>
            <person name="Hu S."/>
            <person name="Zeng C."/>
            <person name="Zhang J."/>
            <person name="Zhang Y."/>
            <person name="Li R."/>
            <person name="Xu Z."/>
            <person name="Li S."/>
            <person name="Li X."/>
            <person name="Zheng H."/>
            <person name="Cong L."/>
            <person name="Lin L."/>
            <person name="Yin J."/>
            <person name="Geng J."/>
            <person name="Li G."/>
            <person name="Shi J."/>
            <person name="Liu J."/>
            <person name="Lv H."/>
            <person name="Li J."/>
            <person name="Wang J."/>
            <person name="Deng Y."/>
            <person name="Ran L."/>
            <person name="Shi X."/>
            <person name="Wang X."/>
            <person name="Wu Q."/>
            <person name="Li C."/>
            <person name="Ren X."/>
            <person name="Wang J."/>
            <person name="Wang X."/>
            <person name="Li D."/>
            <person name="Liu D."/>
            <person name="Zhang X."/>
            <person name="Ji Z."/>
            <person name="Zhao W."/>
            <person name="Sun Y."/>
            <person name="Zhang Z."/>
            <person name="Bao J."/>
            <person name="Han Y."/>
            <person name="Dong L."/>
            <person name="Ji J."/>
            <person name="Chen P."/>
            <person name="Wu S."/>
            <person name="Liu J."/>
            <person name="Xiao Y."/>
            <person name="Bu D."/>
            <person name="Tan J."/>
            <person name="Yang L."/>
            <person name="Ye C."/>
            <person name="Zhang J."/>
            <person name="Xu J."/>
            <person name="Zhou Y."/>
            <person name="Yu Y."/>
            <person name="Zhang B."/>
            <person name="Zhuang S."/>
            <person name="Wei H."/>
            <person name="Liu B."/>
            <person name="Lei M."/>
            <person name="Yu H."/>
            <person name="Li Y."/>
            <person name="Xu H."/>
            <person name="Wei S."/>
            <person name="He X."/>
            <person name="Fang L."/>
            <person name="Zhang Z."/>
            <person name="Zhang Y."/>
            <person name="Huang X."/>
            <person name="Su Z."/>
            <person name="Tong W."/>
            <person name="Li J."/>
            <person name="Tong Z."/>
            <person name="Li S."/>
            <person name="Ye J."/>
            <person name="Wang L."/>
            <person name="Fang L."/>
            <person name="Lei T."/>
            <person name="Chen C.-S."/>
            <person name="Chen H.-C."/>
            <person name="Xu Z."/>
            <person name="Li H."/>
            <person name="Huang H."/>
            <person name="Zhang F."/>
            <person name="Xu H."/>
            <person name="Li N."/>
            <person name="Zhao C."/>
            <person name="Li S."/>
            <person name="Dong L."/>
            <person name="Huang Y."/>
            <person name="Li L."/>
            <person name="Xi Y."/>
            <person name="Qi Q."/>
            <person name="Li W."/>
            <person name="Zhang B."/>
            <person name="Hu W."/>
            <person name="Zhang Y."/>
            <person name="Tian X."/>
            <person name="Jiao Y."/>
            <person name="Liang X."/>
            <person name="Jin J."/>
            <person name="Gao L."/>
            <person name="Zheng W."/>
            <person name="Hao B."/>
            <person name="Liu S.-M."/>
            <person name="Wang W."/>
            <person name="Yuan L."/>
            <person name="Cao M."/>
            <person name="McDermott J."/>
            <person name="Samudrala R."/>
            <person name="Wang J."/>
            <person name="Wong G.K.-S."/>
            <person name="Yang H."/>
        </authorList>
    </citation>
    <scope>NUCLEOTIDE SEQUENCE [LARGE SCALE GENOMIC DNA]</scope>
    <source>
        <strain>cv. 93-11</strain>
    </source>
</reference>
<name>ITPK6_ORYSI</name>
<evidence type="ECO:0000250" key="1">
    <source>
        <dbReference type="UniProtKB" id="Q13572"/>
    </source>
</evidence>
<evidence type="ECO:0000250" key="2">
    <source>
        <dbReference type="UniProtKB" id="Q84Y01"/>
    </source>
</evidence>
<evidence type="ECO:0000250" key="3">
    <source>
        <dbReference type="UniProtKB" id="Q9XYQ1"/>
    </source>
</evidence>
<evidence type="ECO:0000255" key="4">
    <source>
        <dbReference type="PROSITE-ProRule" id="PRU00409"/>
    </source>
</evidence>
<evidence type="ECO:0000305" key="5"/>
<evidence type="ECO:0000312" key="6">
    <source>
        <dbReference type="EMBL" id="EEC84893.1"/>
    </source>
</evidence>
<dbReference type="EC" id="2.7.1.134" evidence="5"/>
<dbReference type="EC" id="2.7.1.159" evidence="5"/>
<dbReference type="EMBL" id="CM000134">
    <property type="protein sequence ID" value="EEC84893.1"/>
    <property type="molecule type" value="Genomic_DNA"/>
</dbReference>
<dbReference type="SMR" id="B8BDK0"/>
<dbReference type="STRING" id="39946.B8BDK0"/>
<dbReference type="EnsemblPlants" id="BGIOSGA029429-TA">
    <property type="protein sequence ID" value="BGIOSGA029429-PA"/>
    <property type="gene ID" value="BGIOSGA029429"/>
</dbReference>
<dbReference type="EnsemblPlants" id="OsLaMu_09g0016700.01">
    <property type="protein sequence ID" value="OsLaMu_09g0016700.01"/>
    <property type="gene ID" value="OsLaMu_09g0016700"/>
</dbReference>
<dbReference type="Gramene" id="BGIOSGA029429-TA">
    <property type="protein sequence ID" value="BGIOSGA029429-PA"/>
    <property type="gene ID" value="BGIOSGA029429"/>
</dbReference>
<dbReference type="Gramene" id="OsLaMu_09g0016700.01">
    <property type="protein sequence ID" value="OsLaMu_09g0016700.01"/>
    <property type="gene ID" value="OsLaMu_09g0016700"/>
</dbReference>
<dbReference type="HOGENOM" id="CLU_041857_2_0_1"/>
<dbReference type="OMA" id="KMAIVFR"/>
<dbReference type="Proteomes" id="UP000007015">
    <property type="component" value="Chromosome 9"/>
</dbReference>
<dbReference type="GO" id="GO:0005737">
    <property type="term" value="C:cytoplasm"/>
    <property type="evidence" value="ECO:0007669"/>
    <property type="project" value="TreeGrafter"/>
</dbReference>
<dbReference type="GO" id="GO:0005524">
    <property type="term" value="F:ATP binding"/>
    <property type="evidence" value="ECO:0007669"/>
    <property type="project" value="UniProtKB-KW"/>
</dbReference>
<dbReference type="GO" id="GO:0052726">
    <property type="term" value="F:inositol-1,3,4-trisphosphate 5-kinase activity"/>
    <property type="evidence" value="ECO:0007669"/>
    <property type="project" value="EnsemblPlants"/>
</dbReference>
<dbReference type="GO" id="GO:0052725">
    <property type="term" value="F:inositol-1,3,4-trisphosphate 6-kinase activity"/>
    <property type="evidence" value="ECO:0007669"/>
    <property type="project" value="EnsemblPlants"/>
</dbReference>
<dbReference type="GO" id="GO:0047325">
    <property type="term" value="F:inositol-3,4,5,6-tetrakisphosphate 1-kinase activity"/>
    <property type="evidence" value="ECO:0007669"/>
    <property type="project" value="UniProtKB-EC"/>
</dbReference>
<dbReference type="GO" id="GO:0000287">
    <property type="term" value="F:magnesium ion binding"/>
    <property type="evidence" value="ECO:0007669"/>
    <property type="project" value="InterPro"/>
</dbReference>
<dbReference type="GO" id="GO:0032957">
    <property type="term" value="P:inositol trisphosphate metabolic process"/>
    <property type="evidence" value="ECO:0007669"/>
    <property type="project" value="InterPro"/>
</dbReference>
<dbReference type="GO" id="GO:0010264">
    <property type="term" value="P:myo-inositol hexakisphosphate biosynthetic process"/>
    <property type="evidence" value="ECO:0007669"/>
    <property type="project" value="EnsemblPlants"/>
</dbReference>
<dbReference type="FunFam" id="3.30.470.20:FF:000047">
    <property type="entry name" value="Inositol-tetrakisphosphate 1-kinase 4"/>
    <property type="match status" value="1"/>
</dbReference>
<dbReference type="Gene3D" id="3.30.470.20">
    <property type="entry name" value="ATP-grasp fold, B domain"/>
    <property type="match status" value="1"/>
</dbReference>
<dbReference type="InterPro" id="IPR008656">
    <property type="entry name" value="Inositol_tetrakis-P_1-kinase"/>
</dbReference>
<dbReference type="InterPro" id="IPR040464">
    <property type="entry name" value="InsP(3)kin_ATP-grasp"/>
</dbReference>
<dbReference type="PANTHER" id="PTHR14217">
    <property type="entry name" value="INOSITOL-TETRAKISPHOSPHATE 1-KINASE"/>
    <property type="match status" value="1"/>
</dbReference>
<dbReference type="PANTHER" id="PTHR14217:SF1">
    <property type="entry name" value="INOSITOL-TETRAKISPHOSPHATE 1-KINASE"/>
    <property type="match status" value="1"/>
</dbReference>
<dbReference type="Pfam" id="PF05770">
    <property type="entry name" value="Ins134_P3_kin"/>
    <property type="match status" value="1"/>
</dbReference>
<dbReference type="PIRSF" id="PIRSF038163">
    <property type="entry name" value="ITPK_uncN"/>
    <property type="match status" value="1"/>
</dbReference>
<dbReference type="SUPFAM" id="SSF56059">
    <property type="entry name" value="Glutathione synthetase ATP-binding domain-like"/>
    <property type="match status" value="1"/>
</dbReference>
<comment type="function">
    <text evidence="2">Kinase that can phosphorylate various inositol polyphosphate such as Ins(3,4,5,6)P4 or Ins(1,3,4)P3 and participates in phytic acid biosynthesis in developing seeds. Phytic acid is the primary storage form of phosphorus in cereal grains and other plant seeds.</text>
</comment>
<comment type="catalytic activity">
    <reaction evidence="5">
        <text>1D-myo-inositol 3,4,5,6-tetrakisphosphate + ATP = 1D-myo-inositol 1,3,4,5,6-pentakisphosphate + ADP + H(+)</text>
        <dbReference type="Rhea" id="RHEA:12452"/>
        <dbReference type="ChEBI" id="CHEBI:15378"/>
        <dbReference type="ChEBI" id="CHEBI:30616"/>
        <dbReference type="ChEBI" id="CHEBI:57539"/>
        <dbReference type="ChEBI" id="CHEBI:57733"/>
        <dbReference type="ChEBI" id="CHEBI:456216"/>
        <dbReference type="EC" id="2.7.1.134"/>
    </reaction>
</comment>
<comment type="catalytic activity">
    <reaction evidence="5">
        <text>1D-myo-inositol 1,3,4-trisphosphate + ATP = 1D-myo-inositol 1,3,4,5-tetrakisphosphate + ADP + H(+)</text>
        <dbReference type="Rhea" id="RHEA:13253"/>
        <dbReference type="ChEBI" id="CHEBI:15378"/>
        <dbReference type="ChEBI" id="CHEBI:30616"/>
        <dbReference type="ChEBI" id="CHEBI:57895"/>
        <dbReference type="ChEBI" id="CHEBI:58414"/>
        <dbReference type="ChEBI" id="CHEBI:456216"/>
        <dbReference type="EC" id="2.7.1.159"/>
    </reaction>
</comment>
<comment type="catalytic activity">
    <reaction evidence="5">
        <text>1D-myo-inositol 1,3,4-trisphosphate + ATP = 1D-myo-inositol 1,3,4,6-tetrakisphosphate + ADP + H(+)</text>
        <dbReference type="Rhea" id="RHEA:20940"/>
        <dbReference type="ChEBI" id="CHEBI:15378"/>
        <dbReference type="ChEBI" id="CHEBI:30616"/>
        <dbReference type="ChEBI" id="CHEBI:57660"/>
        <dbReference type="ChEBI" id="CHEBI:58414"/>
        <dbReference type="ChEBI" id="CHEBI:456216"/>
        <dbReference type="EC" id="2.7.1.159"/>
    </reaction>
</comment>
<comment type="cofactor">
    <cofactor evidence="1">
        <name>Mg(2+)</name>
        <dbReference type="ChEBI" id="CHEBI:18420"/>
    </cofactor>
    <text evidence="1">Binds 2 magnesium ions per subunit.</text>
</comment>
<comment type="subunit">
    <text evidence="1">Monomer.</text>
</comment>
<comment type="similarity">
    <text evidence="5">Belongs to the ITPK1 family.</text>
</comment>